<keyword id="KW-0067">ATP-binding</keyword>
<keyword id="KW-0143">Chaperone</keyword>
<keyword id="KW-0479">Metal-binding</keyword>
<keyword id="KW-0547">Nucleotide-binding</keyword>
<keyword id="KW-0862">Zinc</keyword>
<name>CLPX_YERPB</name>
<proteinExistence type="inferred from homology"/>
<comment type="function">
    <text evidence="1">ATP-dependent specificity component of the Clp protease. It directs the protease to specific substrates. Can perform chaperone functions in the absence of ClpP.</text>
</comment>
<comment type="subunit">
    <text evidence="1">Component of the ClpX-ClpP complex. Forms a hexameric ring that, in the presence of ATP, binds to fourteen ClpP subunits assembled into a disk-like structure with a central cavity, resembling the structure of eukaryotic proteasomes.</text>
</comment>
<comment type="similarity">
    <text evidence="1">Belongs to the ClpX chaperone family.</text>
</comment>
<accession>B2K6V8</accession>
<dbReference type="EMBL" id="CP001048">
    <property type="protein sequence ID" value="ACC87982.1"/>
    <property type="molecule type" value="Genomic_DNA"/>
</dbReference>
<dbReference type="RefSeq" id="WP_002208641.1">
    <property type="nucleotide sequence ID" value="NZ_CP009780.1"/>
</dbReference>
<dbReference type="SMR" id="B2K6V8"/>
<dbReference type="GeneID" id="96664466"/>
<dbReference type="KEGG" id="ypb:YPTS_1001"/>
<dbReference type="PATRIC" id="fig|502801.10.peg.342"/>
<dbReference type="GO" id="GO:0009376">
    <property type="term" value="C:HslUV protease complex"/>
    <property type="evidence" value="ECO:0007669"/>
    <property type="project" value="TreeGrafter"/>
</dbReference>
<dbReference type="GO" id="GO:0005524">
    <property type="term" value="F:ATP binding"/>
    <property type="evidence" value="ECO:0007669"/>
    <property type="project" value="UniProtKB-UniRule"/>
</dbReference>
<dbReference type="GO" id="GO:0016887">
    <property type="term" value="F:ATP hydrolysis activity"/>
    <property type="evidence" value="ECO:0007669"/>
    <property type="project" value="InterPro"/>
</dbReference>
<dbReference type="GO" id="GO:0140662">
    <property type="term" value="F:ATP-dependent protein folding chaperone"/>
    <property type="evidence" value="ECO:0007669"/>
    <property type="project" value="InterPro"/>
</dbReference>
<dbReference type="GO" id="GO:0046983">
    <property type="term" value="F:protein dimerization activity"/>
    <property type="evidence" value="ECO:0007669"/>
    <property type="project" value="InterPro"/>
</dbReference>
<dbReference type="GO" id="GO:0051082">
    <property type="term" value="F:unfolded protein binding"/>
    <property type="evidence" value="ECO:0007669"/>
    <property type="project" value="UniProtKB-UniRule"/>
</dbReference>
<dbReference type="GO" id="GO:0008270">
    <property type="term" value="F:zinc ion binding"/>
    <property type="evidence" value="ECO:0007669"/>
    <property type="project" value="InterPro"/>
</dbReference>
<dbReference type="GO" id="GO:0051301">
    <property type="term" value="P:cell division"/>
    <property type="evidence" value="ECO:0007669"/>
    <property type="project" value="TreeGrafter"/>
</dbReference>
<dbReference type="GO" id="GO:0051603">
    <property type="term" value="P:proteolysis involved in protein catabolic process"/>
    <property type="evidence" value="ECO:0007669"/>
    <property type="project" value="TreeGrafter"/>
</dbReference>
<dbReference type="CDD" id="cd19497">
    <property type="entry name" value="RecA-like_ClpX"/>
    <property type="match status" value="1"/>
</dbReference>
<dbReference type="FunFam" id="1.10.8.60:FF:000002">
    <property type="entry name" value="ATP-dependent Clp protease ATP-binding subunit ClpX"/>
    <property type="match status" value="1"/>
</dbReference>
<dbReference type="FunFam" id="3.40.50.300:FF:000005">
    <property type="entry name" value="ATP-dependent Clp protease ATP-binding subunit ClpX"/>
    <property type="match status" value="1"/>
</dbReference>
<dbReference type="Gene3D" id="1.10.8.60">
    <property type="match status" value="1"/>
</dbReference>
<dbReference type="Gene3D" id="6.20.220.10">
    <property type="entry name" value="ClpX chaperone, C4-type zinc finger domain"/>
    <property type="match status" value="1"/>
</dbReference>
<dbReference type="Gene3D" id="3.40.50.300">
    <property type="entry name" value="P-loop containing nucleotide triphosphate hydrolases"/>
    <property type="match status" value="1"/>
</dbReference>
<dbReference type="HAMAP" id="MF_00175">
    <property type="entry name" value="ClpX"/>
    <property type="match status" value="1"/>
</dbReference>
<dbReference type="InterPro" id="IPR003593">
    <property type="entry name" value="AAA+_ATPase"/>
</dbReference>
<dbReference type="InterPro" id="IPR050052">
    <property type="entry name" value="ATP-dep_Clp_protease_ClpX"/>
</dbReference>
<dbReference type="InterPro" id="IPR003959">
    <property type="entry name" value="ATPase_AAA_core"/>
</dbReference>
<dbReference type="InterPro" id="IPR019489">
    <property type="entry name" value="Clp_ATPase_C"/>
</dbReference>
<dbReference type="InterPro" id="IPR004487">
    <property type="entry name" value="Clp_protease_ATP-bd_su_ClpX"/>
</dbReference>
<dbReference type="InterPro" id="IPR046425">
    <property type="entry name" value="ClpX_bact"/>
</dbReference>
<dbReference type="InterPro" id="IPR027417">
    <property type="entry name" value="P-loop_NTPase"/>
</dbReference>
<dbReference type="InterPro" id="IPR010603">
    <property type="entry name" value="Znf_CppX_C4"/>
</dbReference>
<dbReference type="InterPro" id="IPR038366">
    <property type="entry name" value="Znf_CppX_C4_sf"/>
</dbReference>
<dbReference type="NCBIfam" id="TIGR00382">
    <property type="entry name" value="clpX"/>
    <property type="match status" value="1"/>
</dbReference>
<dbReference type="NCBIfam" id="NF003745">
    <property type="entry name" value="PRK05342.1"/>
    <property type="match status" value="1"/>
</dbReference>
<dbReference type="PANTHER" id="PTHR48102:SF7">
    <property type="entry name" value="ATP-DEPENDENT CLP PROTEASE ATP-BINDING SUBUNIT CLPX-LIKE, MITOCHONDRIAL"/>
    <property type="match status" value="1"/>
</dbReference>
<dbReference type="PANTHER" id="PTHR48102">
    <property type="entry name" value="ATP-DEPENDENT CLP PROTEASE ATP-BINDING SUBUNIT CLPX-LIKE, MITOCHONDRIAL-RELATED"/>
    <property type="match status" value="1"/>
</dbReference>
<dbReference type="Pfam" id="PF07724">
    <property type="entry name" value="AAA_2"/>
    <property type="match status" value="1"/>
</dbReference>
<dbReference type="Pfam" id="PF10431">
    <property type="entry name" value="ClpB_D2-small"/>
    <property type="match status" value="1"/>
</dbReference>
<dbReference type="Pfam" id="PF06689">
    <property type="entry name" value="zf-C4_ClpX"/>
    <property type="match status" value="1"/>
</dbReference>
<dbReference type="SMART" id="SM00382">
    <property type="entry name" value="AAA"/>
    <property type="match status" value="1"/>
</dbReference>
<dbReference type="SMART" id="SM01086">
    <property type="entry name" value="ClpB_D2-small"/>
    <property type="match status" value="1"/>
</dbReference>
<dbReference type="SMART" id="SM00994">
    <property type="entry name" value="zf-C4_ClpX"/>
    <property type="match status" value="1"/>
</dbReference>
<dbReference type="SUPFAM" id="SSF57716">
    <property type="entry name" value="Glucocorticoid receptor-like (DNA-binding domain)"/>
    <property type="match status" value="1"/>
</dbReference>
<dbReference type="SUPFAM" id="SSF52540">
    <property type="entry name" value="P-loop containing nucleoside triphosphate hydrolases"/>
    <property type="match status" value="1"/>
</dbReference>
<dbReference type="PROSITE" id="PS51902">
    <property type="entry name" value="CLPX_ZB"/>
    <property type="match status" value="1"/>
</dbReference>
<gene>
    <name evidence="1" type="primary">clpX</name>
    <name type="ordered locus">YPTS_1001</name>
</gene>
<organism>
    <name type="scientific">Yersinia pseudotuberculosis serotype IB (strain PB1/+)</name>
    <dbReference type="NCBI Taxonomy" id="502801"/>
    <lineage>
        <taxon>Bacteria</taxon>
        <taxon>Pseudomonadati</taxon>
        <taxon>Pseudomonadota</taxon>
        <taxon>Gammaproteobacteria</taxon>
        <taxon>Enterobacterales</taxon>
        <taxon>Yersiniaceae</taxon>
        <taxon>Yersinia</taxon>
    </lineage>
</organism>
<protein>
    <recommendedName>
        <fullName evidence="1">ATP-dependent Clp protease ATP-binding subunit ClpX</fullName>
    </recommendedName>
</protein>
<sequence length="423" mass="46033">MTDKRKDGSGKLLYCSFCGKSQHEVRKLIAGPSVYICDECVDLCNDIIREEIKEVSPHRDRSSLPTPHEIRHHLDDYVIGQEPAKKVLAVAVYNHYKRLRNGDTSNGIELGKSNILLIGPTGSGKTLLAETLARLLDVPFTMADATTLTEAGYVGEDVENIIQKLLQKCDYDVQKAQRGIVYIDEIDKISRKSDNPSITRDVSGEGVQQALLKLIEGTIAAVPPQGGRKHPQQEFLQVDTSKILFICGGAFAGLDKVIGQRINTGSGIGFGAVVKGQSEKATEGELLSQVEPEDLIKFGLIPEFIGRLPVVATLSELSEDALIQILKEPKNALTKQYQALFSLEGVELEFRDEALTAIAKKAMARKTGARGLRSIVEGALLDTMYDLPSMDSVEKVVVDESVIAGQSAPMLIYGQPEAQASGE</sequence>
<feature type="chain" id="PRO_1000098021" description="ATP-dependent Clp protease ATP-binding subunit ClpX">
    <location>
        <begin position="1"/>
        <end position="423"/>
    </location>
</feature>
<feature type="domain" description="ClpX-type ZB" evidence="2">
    <location>
        <begin position="2"/>
        <end position="56"/>
    </location>
</feature>
<feature type="binding site" evidence="2">
    <location>
        <position position="15"/>
    </location>
    <ligand>
        <name>Zn(2+)</name>
        <dbReference type="ChEBI" id="CHEBI:29105"/>
    </ligand>
</feature>
<feature type="binding site" evidence="2">
    <location>
        <position position="18"/>
    </location>
    <ligand>
        <name>Zn(2+)</name>
        <dbReference type="ChEBI" id="CHEBI:29105"/>
    </ligand>
</feature>
<feature type="binding site" evidence="2">
    <location>
        <position position="37"/>
    </location>
    <ligand>
        <name>Zn(2+)</name>
        <dbReference type="ChEBI" id="CHEBI:29105"/>
    </ligand>
</feature>
<feature type="binding site" evidence="2">
    <location>
        <position position="40"/>
    </location>
    <ligand>
        <name>Zn(2+)</name>
        <dbReference type="ChEBI" id="CHEBI:29105"/>
    </ligand>
</feature>
<feature type="binding site" evidence="1">
    <location>
        <begin position="120"/>
        <end position="127"/>
    </location>
    <ligand>
        <name>ATP</name>
        <dbReference type="ChEBI" id="CHEBI:30616"/>
    </ligand>
</feature>
<reference key="1">
    <citation type="submission" date="2008-04" db="EMBL/GenBank/DDBJ databases">
        <title>Complete sequence of Yersinia pseudotuberculosis PB1/+.</title>
        <authorList>
            <person name="Copeland A."/>
            <person name="Lucas S."/>
            <person name="Lapidus A."/>
            <person name="Glavina del Rio T."/>
            <person name="Dalin E."/>
            <person name="Tice H."/>
            <person name="Bruce D."/>
            <person name="Goodwin L."/>
            <person name="Pitluck S."/>
            <person name="Munk A.C."/>
            <person name="Brettin T."/>
            <person name="Detter J.C."/>
            <person name="Han C."/>
            <person name="Tapia R."/>
            <person name="Schmutz J."/>
            <person name="Larimer F."/>
            <person name="Land M."/>
            <person name="Hauser L."/>
            <person name="Challacombe J.F."/>
            <person name="Green L."/>
            <person name="Lindler L.E."/>
            <person name="Nikolich M.P."/>
            <person name="Richardson P."/>
        </authorList>
    </citation>
    <scope>NUCLEOTIDE SEQUENCE [LARGE SCALE GENOMIC DNA]</scope>
    <source>
        <strain>PB1/+</strain>
    </source>
</reference>
<evidence type="ECO:0000255" key="1">
    <source>
        <dbReference type="HAMAP-Rule" id="MF_00175"/>
    </source>
</evidence>
<evidence type="ECO:0000255" key="2">
    <source>
        <dbReference type="PROSITE-ProRule" id="PRU01250"/>
    </source>
</evidence>